<accession>Q93VH6</accession>
<accession>O23091</accession>
<sequence length="223" mass="23770">MQQSPQMIPMVLPSFPPTNNITTEQIQKYLDENKKLIMAILENQNLGKLAECAQYQALLQKNLMYLAAIADAQPQPPAATLTSGAMTPQAMAPNPSSMQPPPSYFMQQHQAVGMAQQIPPGIFPPRGPLQFGSPHQFLDPQQQLHQQAMQGHMGIRPMGLNNNNGLQHQMHHHETALAANNAGPNDASGGGKPDGTNMSQSGADGQGGSAARHGGGDAKTEGK</sequence>
<proteinExistence type="evidence at protein level"/>
<organism>
    <name type="scientific">Arabidopsis thaliana</name>
    <name type="common">Mouse-ear cress</name>
    <dbReference type="NCBI Taxonomy" id="3702"/>
    <lineage>
        <taxon>Eukaryota</taxon>
        <taxon>Viridiplantae</taxon>
        <taxon>Streptophyta</taxon>
        <taxon>Embryophyta</taxon>
        <taxon>Tracheophyta</taxon>
        <taxon>Spermatophyta</taxon>
        <taxon>Magnoliopsida</taxon>
        <taxon>eudicotyledons</taxon>
        <taxon>Gunneridae</taxon>
        <taxon>Pentapetalae</taxon>
        <taxon>rosids</taxon>
        <taxon>malvids</taxon>
        <taxon>Brassicales</taxon>
        <taxon>Brassicaceae</taxon>
        <taxon>Camelineae</taxon>
        <taxon>Arabidopsis</taxon>
    </lineage>
</organism>
<gene>
    <name type="primary">GIF3</name>
    <name type="ordered locus">At4g00850</name>
    <name type="ORF">A_TM018A10_22</name>
</gene>
<evidence type="ECO:0000250" key="1"/>
<evidence type="ECO:0000256" key="2">
    <source>
        <dbReference type="SAM" id="MobiDB-lite"/>
    </source>
</evidence>
<evidence type="ECO:0000269" key="3">
    <source>
    </source>
</evidence>
<evidence type="ECO:0000269" key="4">
    <source>
    </source>
</evidence>
<evidence type="ECO:0000305" key="5"/>
<reference key="1">
    <citation type="journal article" date="2004" name="Proc. Natl. Acad. Sci. U.S.A.">
        <title>A transcriptional coactivator, AtGIF1, is involved in regulating leaf growth and morphology in Arabidopsis.</title>
        <authorList>
            <person name="Kim J.H."/>
            <person name="Kende H."/>
        </authorList>
    </citation>
    <scope>NUCLEOTIDE SEQUENCE [MRNA]</scope>
    <scope>FUNCTION</scope>
    <scope>INTERACTION WITH GRF1</scope>
    <scope>TISSUE SPECIFICITY</scope>
</reference>
<reference key="2">
    <citation type="journal article" date="1999" name="Nature">
        <title>Sequence and analysis of chromosome 4 of the plant Arabidopsis thaliana.</title>
        <authorList>
            <person name="Mayer K.F.X."/>
            <person name="Schueller C."/>
            <person name="Wambutt R."/>
            <person name="Murphy G."/>
            <person name="Volckaert G."/>
            <person name="Pohl T."/>
            <person name="Duesterhoeft A."/>
            <person name="Stiekema W."/>
            <person name="Entian K.-D."/>
            <person name="Terryn N."/>
            <person name="Harris B."/>
            <person name="Ansorge W."/>
            <person name="Brandt P."/>
            <person name="Grivell L.A."/>
            <person name="Rieger M."/>
            <person name="Weichselgartner M."/>
            <person name="de Simone V."/>
            <person name="Obermaier B."/>
            <person name="Mache R."/>
            <person name="Mueller M."/>
            <person name="Kreis M."/>
            <person name="Delseny M."/>
            <person name="Puigdomenech P."/>
            <person name="Watson M."/>
            <person name="Schmidtheini T."/>
            <person name="Reichert B."/>
            <person name="Portetelle D."/>
            <person name="Perez-Alonso M."/>
            <person name="Boutry M."/>
            <person name="Bancroft I."/>
            <person name="Vos P."/>
            <person name="Hoheisel J."/>
            <person name="Zimmermann W."/>
            <person name="Wedler H."/>
            <person name="Ridley P."/>
            <person name="Langham S.-A."/>
            <person name="McCullagh B."/>
            <person name="Bilham L."/>
            <person name="Robben J."/>
            <person name="van der Schueren J."/>
            <person name="Grymonprez B."/>
            <person name="Chuang Y.-J."/>
            <person name="Vandenbussche F."/>
            <person name="Braeken M."/>
            <person name="Weltjens I."/>
            <person name="Voet M."/>
            <person name="Bastiaens I."/>
            <person name="Aert R."/>
            <person name="Defoor E."/>
            <person name="Weitzenegger T."/>
            <person name="Bothe G."/>
            <person name="Ramsperger U."/>
            <person name="Hilbert H."/>
            <person name="Braun M."/>
            <person name="Holzer E."/>
            <person name="Brandt A."/>
            <person name="Peters S."/>
            <person name="van Staveren M."/>
            <person name="Dirkse W."/>
            <person name="Mooijman P."/>
            <person name="Klein Lankhorst R."/>
            <person name="Rose M."/>
            <person name="Hauf J."/>
            <person name="Koetter P."/>
            <person name="Berneiser S."/>
            <person name="Hempel S."/>
            <person name="Feldpausch M."/>
            <person name="Lamberth S."/>
            <person name="Van den Daele H."/>
            <person name="De Keyser A."/>
            <person name="Buysshaert C."/>
            <person name="Gielen J."/>
            <person name="Villarroel R."/>
            <person name="De Clercq R."/>
            <person name="van Montagu M."/>
            <person name="Rogers J."/>
            <person name="Cronin A."/>
            <person name="Quail M.A."/>
            <person name="Bray-Allen S."/>
            <person name="Clark L."/>
            <person name="Doggett J."/>
            <person name="Hall S."/>
            <person name="Kay M."/>
            <person name="Lennard N."/>
            <person name="McLay K."/>
            <person name="Mayes R."/>
            <person name="Pettett A."/>
            <person name="Rajandream M.A."/>
            <person name="Lyne M."/>
            <person name="Benes V."/>
            <person name="Rechmann S."/>
            <person name="Borkova D."/>
            <person name="Bloecker H."/>
            <person name="Scharfe M."/>
            <person name="Grimm M."/>
            <person name="Loehnert T.-H."/>
            <person name="Dose S."/>
            <person name="de Haan M."/>
            <person name="Maarse A.C."/>
            <person name="Schaefer M."/>
            <person name="Mueller-Auer S."/>
            <person name="Gabel C."/>
            <person name="Fuchs M."/>
            <person name="Fartmann B."/>
            <person name="Granderath K."/>
            <person name="Dauner D."/>
            <person name="Herzl A."/>
            <person name="Neumann S."/>
            <person name="Argiriou A."/>
            <person name="Vitale D."/>
            <person name="Liguori R."/>
            <person name="Piravandi E."/>
            <person name="Massenet O."/>
            <person name="Quigley F."/>
            <person name="Clabauld G."/>
            <person name="Muendlein A."/>
            <person name="Felber R."/>
            <person name="Schnabl S."/>
            <person name="Hiller R."/>
            <person name="Schmidt W."/>
            <person name="Lecharny A."/>
            <person name="Aubourg S."/>
            <person name="Chefdor F."/>
            <person name="Cooke R."/>
            <person name="Berger C."/>
            <person name="Monfort A."/>
            <person name="Casacuberta E."/>
            <person name="Gibbons T."/>
            <person name="Weber N."/>
            <person name="Vandenbol M."/>
            <person name="Bargues M."/>
            <person name="Terol J."/>
            <person name="Torres A."/>
            <person name="Perez-Perez A."/>
            <person name="Purnelle B."/>
            <person name="Bent E."/>
            <person name="Johnson S."/>
            <person name="Tacon D."/>
            <person name="Jesse T."/>
            <person name="Heijnen L."/>
            <person name="Schwarz S."/>
            <person name="Scholler P."/>
            <person name="Heber S."/>
            <person name="Francs P."/>
            <person name="Bielke C."/>
            <person name="Frishman D."/>
            <person name="Haase D."/>
            <person name="Lemcke K."/>
            <person name="Mewes H.-W."/>
            <person name="Stocker S."/>
            <person name="Zaccaria P."/>
            <person name="Bevan M."/>
            <person name="Wilson R.K."/>
            <person name="de la Bastide M."/>
            <person name="Habermann K."/>
            <person name="Parnell L."/>
            <person name="Dedhia N."/>
            <person name="Gnoj L."/>
            <person name="Schutz K."/>
            <person name="Huang E."/>
            <person name="Spiegel L."/>
            <person name="Sekhon M."/>
            <person name="Murray J."/>
            <person name="Sheet P."/>
            <person name="Cordes M."/>
            <person name="Abu-Threideh J."/>
            <person name="Stoneking T."/>
            <person name="Kalicki J."/>
            <person name="Graves T."/>
            <person name="Harmon G."/>
            <person name="Edwards J."/>
            <person name="Latreille P."/>
            <person name="Courtney L."/>
            <person name="Cloud J."/>
            <person name="Abbott A."/>
            <person name="Scott K."/>
            <person name="Johnson D."/>
            <person name="Minx P."/>
            <person name="Bentley D."/>
            <person name="Fulton B."/>
            <person name="Miller N."/>
            <person name="Greco T."/>
            <person name="Kemp K."/>
            <person name="Kramer J."/>
            <person name="Fulton L."/>
            <person name="Mardis E."/>
            <person name="Dante M."/>
            <person name="Pepin K."/>
            <person name="Hillier L.W."/>
            <person name="Nelson J."/>
            <person name="Spieth J."/>
            <person name="Ryan E."/>
            <person name="Andrews S."/>
            <person name="Geisel C."/>
            <person name="Layman D."/>
            <person name="Du H."/>
            <person name="Ali J."/>
            <person name="Berghoff A."/>
            <person name="Jones K."/>
            <person name="Drone K."/>
            <person name="Cotton M."/>
            <person name="Joshu C."/>
            <person name="Antonoiu B."/>
            <person name="Zidanic M."/>
            <person name="Strong C."/>
            <person name="Sun H."/>
            <person name="Lamar B."/>
            <person name="Yordan C."/>
            <person name="Ma P."/>
            <person name="Zhong J."/>
            <person name="Preston R."/>
            <person name="Vil D."/>
            <person name="Shekher M."/>
            <person name="Matero A."/>
            <person name="Shah R."/>
            <person name="Swaby I.K."/>
            <person name="O'Shaughnessy A."/>
            <person name="Rodriguez M."/>
            <person name="Hoffman J."/>
            <person name="Till S."/>
            <person name="Granat S."/>
            <person name="Shohdy N."/>
            <person name="Hasegawa A."/>
            <person name="Hameed A."/>
            <person name="Lodhi M."/>
            <person name="Johnson A."/>
            <person name="Chen E."/>
            <person name="Marra M.A."/>
            <person name="Martienssen R."/>
            <person name="McCombie W.R."/>
        </authorList>
    </citation>
    <scope>NUCLEOTIDE SEQUENCE [LARGE SCALE GENOMIC DNA]</scope>
    <source>
        <strain>cv. Columbia</strain>
    </source>
</reference>
<reference key="3">
    <citation type="journal article" date="2017" name="Plant J.">
        <title>Araport11: a complete reannotation of the Arabidopsis thaliana reference genome.</title>
        <authorList>
            <person name="Cheng C.Y."/>
            <person name="Krishnakumar V."/>
            <person name="Chan A.P."/>
            <person name="Thibaud-Nissen F."/>
            <person name="Schobel S."/>
            <person name="Town C.D."/>
        </authorList>
    </citation>
    <scope>GENOME REANNOTATION</scope>
    <source>
        <strain>cv. Columbia</strain>
    </source>
</reference>
<reference key="4">
    <citation type="journal article" date="2003" name="Science">
        <title>Empirical analysis of transcriptional activity in the Arabidopsis genome.</title>
        <authorList>
            <person name="Yamada K."/>
            <person name="Lim J."/>
            <person name="Dale J.M."/>
            <person name="Chen H."/>
            <person name="Shinn P."/>
            <person name="Palm C.J."/>
            <person name="Southwick A.M."/>
            <person name="Wu H.C."/>
            <person name="Kim C.J."/>
            <person name="Nguyen M."/>
            <person name="Pham P.K."/>
            <person name="Cheuk R.F."/>
            <person name="Karlin-Newmann G."/>
            <person name="Liu S.X."/>
            <person name="Lam B."/>
            <person name="Sakano H."/>
            <person name="Wu T."/>
            <person name="Yu G."/>
            <person name="Miranda M."/>
            <person name="Quach H.L."/>
            <person name="Tripp M."/>
            <person name="Chang C.H."/>
            <person name="Lee J.M."/>
            <person name="Toriumi M.J."/>
            <person name="Chan M.M."/>
            <person name="Tang C.C."/>
            <person name="Onodera C.S."/>
            <person name="Deng J.M."/>
            <person name="Akiyama K."/>
            <person name="Ansari Y."/>
            <person name="Arakawa T."/>
            <person name="Banh J."/>
            <person name="Banno F."/>
            <person name="Bowser L."/>
            <person name="Brooks S.Y."/>
            <person name="Carninci P."/>
            <person name="Chao Q."/>
            <person name="Choy N."/>
            <person name="Enju A."/>
            <person name="Goldsmith A.D."/>
            <person name="Gurjal M."/>
            <person name="Hansen N.F."/>
            <person name="Hayashizaki Y."/>
            <person name="Johnson-Hopson C."/>
            <person name="Hsuan V.W."/>
            <person name="Iida K."/>
            <person name="Karnes M."/>
            <person name="Khan S."/>
            <person name="Koesema E."/>
            <person name="Ishida J."/>
            <person name="Jiang P.X."/>
            <person name="Jones T."/>
            <person name="Kawai J."/>
            <person name="Kamiya A."/>
            <person name="Meyers C."/>
            <person name="Nakajima M."/>
            <person name="Narusaka M."/>
            <person name="Seki M."/>
            <person name="Sakurai T."/>
            <person name="Satou M."/>
            <person name="Tamse R."/>
            <person name="Vaysberg M."/>
            <person name="Wallender E.K."/>
            <person name="Wong C."/>
            <person name="Yamamura Y."/>
            <person name="Yuan S."/>
            <person name="Shinozaki K."/>
            <person name="Davis R.W."/>
            <person name="Theologis A."/>
            <person name="Ecker J.R."/>
        </authorList>
    </citation>
    <scope>NUCLEOTIDE SEQUENCE [LARGE SCALE MRNA]</scope>
    <source>
        <strain>cv. Columbia</strain>
    </source>
</reference>
<reference key="5">
    <citation type="journal article" date="2009" name="Plant Physiol.">
        <title>The Arabidopsis GRF-INTERACTING FACTOR gene family performs an overlapping function in determining organ size as well as multiple developmental properties.</title>
        <authorList>
            <person name="Lee B.H."/>
            <person name="Ko J.H."/>
            <person name="Lee S."/>
            <person name="Lee Y."/>
            <person name="Pak J.H."/>
            <person name="Kim J.H."/>
        </authorList>
    </citation>
    <scope>GENE FAMILY</scope>
    <scope>FUNCTION</scope>
</reference>
<feature type="chain" id="PRO_0000419320" description="GRF1-interacting factor 3">
    <location>
        <begin position="1"/>
        <end position="223"/>
    </location>
</feature>
<feature type="region of interest" description="Disordered" evidence="2">
    <location>
        <begin position="179"/>
        <end position="223"/>
    </location>
</feature>
<feature type="compositionally biased region" description="Basic and acidic residues" evidence="2">
    <location>
        <begin position="214"/>
        <end position="223"/>
    </location>
</feature>
<name>GIF3_ARATH</name>
<dbReference type="EMBL" id="AY102641">
    <property type="protein sequence ID" value="AAM52883.1"/>
    <property type="molecule type" value="mRNA"/>
</dbReference>
<dbReference type="EMBL" id="AF013294">
    <property type="protein sequence ID" value="AAB62864.1"/>
    <property type="status" value="ALT_SEQ"/>
    <property type="molecule type" value="Genomic_DNA"/>
</dbReference>
<dbReference type="EMBL" id="AL161472">
    <property type="protein sequence ID" value="CAB80894.1"/>
    <property type="status" value="ALT_SEQ"/>
    <property type="molecule type" value="Genomic_DNA"/>
</dbReference>
<dbReference type="EMBL" id="CP002687">
    <property type="protein sequence ID" value="AEE81945.1"/>
    <property type="molecule type" value="Genomic_DNA"/>
</dbReference>
<dbReference type="EMBL" id="AF378866">
    <property type="protein sequence ID" value="AAK55669.1"/>
    <property type="molecule type" value="mRNA"/>
</dbReference>
<dbReference type="EMBL" id="AY052732">
    <property type="protein sequence ID" value="AAK96446.1"/>
    <property type="molecule type" value="mRNA"/>
</dbReference>
<dbReference type="PIR" id="T01561">
    <property type="entry name" value="T01561"/>
</dbReference>
<dbReference type="RefSeq" id="NP_567194.1">
    <property type="nucleotide sequence ID" value="NM_116311.4"/>
</dbReference>
<dbReference type="SMR" id="Q93VH6"/>
<dbReference type="BioGRID" id="13286">
    <property type="interactions" value="13"/>
</dbReference>
<dbReference type="ComplexPortal" id="CPX-7723">
    <property type="entry name" value="BRAHMA SWI/SNF ATP-dependent chromatin remodeling complex"/>
</dbReference>
<dbReference type="ComplexPortal" id="CPX-7726">
    <property type="entry name" value="SYD-associated SWI/SNF ATP-dependent chromatin remodeling complex"/>
</dbReference>
<dbReference type="FunCoup" id="Q93VH6">
    <property type="interactions" value="222"/>
</dbReference>
<dbReference type="IntAct" id="Q93VH6">
    <property type="interactions" value="12"/>
</dbReference>
<dbReference type="STRING" id="3702.Q93VH6"/>
<dbReference type="PaxDb" id="3702-AT4G00850.1"/>
<dbReference type="ProteomicsDB" id="221891"/>
<dbReference type="EnsemblPlants" id="AT4G00850.1">
    <property type="protein sequence ID" value="AT4G00850.1"/>
    <property type="gene ID" value="AT4G00850"/>
</dbReference>
<dbReference type="GeneID" id="827995"/>
<dbReference type="Gramene" id="AT4G00850.1">
    <property type="protein sequence ID" value="AT4G00850.1"/>
    <property type="gene ID" value="AT4G00850"/>
</dbReference>
<dbReference type="KEGG" id="ath:AT4G00850"/>
<dbReference type="Araport" id="AT4G00850"/>
<dbReference type="TAIR" id="AT4G00850">
    <property type="gene designation" value="GIF3"/>
</dbReference>
<dbReference type="eggNOG" id="KOG3227">
    <property type="taxonomic scope" value="Eukaryota"/>
</dbReference>
<dbReference type="HOGENOM" id="CLU_086253_1_0_1"/>
<dbReference type="InParanoid" id="Q93VH6"/>
<dbReference type="OMA" id="NAHECVQ"/>
<dbReference type="PhylomeDB" id="Q93VH6"/>
<dbReference type="PRO" id="PR:Q93VH6"/>
<dbReference type="Proteomes" id="UP000006548">
    <property type="component" value="Chromosome 4"/>
</dbReference>
<dbReference type="ExpressionAtlas" id="Q93VH6">
    <property type="expression patterns" value="baseline and differential"/>
</dbReference>
<dbReference type="GO" id="GO:0005634">
    <property type="term" value="C:nucleus"/>
    <property type="evidence" value="ECO:0000250"/>
    <property type="project" value="TAIR"/>
</dbReference>
<dbReference type="GO" id="GO:0003713">
    <property type="term" value="F:transcription coactivator activity"/>
    <property type="evidence" value="ECO:0000250"/>
    <property type="project" value="TAIR"/>
</dbReference>
<dbReference type="GO" id="GO:0051301">
    <property type="term" value="P:cell division"/>
    <property type="evidence" value="ECO:0000316"/>
    <property type="project" value="TAIR"/>
</dbReference>
<dbReference type="GO" id="GO:0048366">
    <property type="term" value="P:leaf development"/>
    <property type="evidence" value="ECO:0000315"/>
    <property type="project" value="TAIR"/>
</dbReference>
<dbReference type="InterPro" id="IPR007726">
    <property type="entry name" value="SS18_N"/>
</dbReference>
<dbReference type="Pfam" id="PF05030">
    <property type="entry name" value="SSXT"/>
    <property type="match status" value="1"/>
</dbReference>
<comment type="function">
    <text evidence="1 3 4">Transcription coactivator that plays a role in the regulation of cell expansion in leaf and cotyledons tissues (By similarity). Component of a network formed by miR396, the GRFs and their interacting factors (GIFs) acting in the regulation of meristem function, at least partially through the control of cell proliferation (By similarity). GIFs are involved in the positive regulation of cell proliferation of lateral organs in a functionally redundant manner.</text>
</comment>
<comment type="subunit">
    <text evidence="3">Interacts with GRF1.</text>
</comment>
<comment type="interaction">
    <interactant intactId="EBI-15194507">
        <id>Q93VH6</id>
    </interactant>
    <interactant intactId="EBI-1396842">
        <id>O81001</id>
        <label>GRF1</label>
    </interactant>
    <organismsDiffer>false</organismsDiffer>
    <experiments>3</experiments>
</comment>
<comment type="interaction">
    <interactant intactId="EBI-15194507">
        <id>Q93VH6</id>
    </interactant>
    <interactant intactId="EBI-1396893">
        <id>Q8L8A8</id>
        <label>GRF2</label>
    </interactant>
    <organismsDiffer>false</organismsDiffer>
    <experiments>3</experiments>
</comment>
<comment type="interaction">
    <interactant intactId="EBI-15194507">
        <id>Q93VH6</id>
    </interactant>
    <interactant intactId="EBI-3134219">
        <id>Q9SJR5</id>
        <label>GRF3</label>
    </interactant>
    <organismsDiffer>false</organismsDiffer>
    <experiments>3</experiments>
</comment>
<comment type="interaction">
    <interactant intactId="EBI-15194507">
        <id>Q93VH6</id>
    </interactant>
    <interactant intactId="EBI-1396671">
        <id>Q8L8A7</id>
        <label>GRF4</label>
    </interactant>
    <organismsDiffer>false</organismsDiffer>
    <experiments>4</experiments>
</comment>
<comment type="interaction">
    <interactant intactId="EBI-15194507">
        <id>Q93VH6</id>
    </interactant>
    <interactant intactId="EBI-1396652">
        <id>Q8L8A6</id>
        <label>GRF5</label>
    </interactant>
    <organismsDiffer>false</organismsDiffer>
    <experiments>3</experiments>
</comment>
<comment type="interaction">
    <interactant intactId="EBI-15194507">
        <id>Q93VH6</id>
    </interactant>
    <interactant intactId="EBI-15193797">
        <id>Q9ZQ12</id>
        <label>GRF6</label>
    </interactant>
    <organismsDiffer>false</organismsDiffer>
    <experiments>3</experiments>
</comment>
<comment type="interaction">
    <interactant intactId="EBI-15194507">
        <id>Q93VH6</id>
    </interactant>
    <interactant intactId="EBI-1396638">
        <id>Q8S9M3</id>
        <label>GRF9</label>
    </interactant>
    <organismsDiffer>false</organismsDiffer>
    <experiments>3</experiments>
</comment>
<comment type="interaction">
    <interactant intactId="EBI-15194507">
        <id>Q93VH6</id>
    </interactant>
    <interactant intactId="EBI-15193011">
        <id>Q9LM84</id>
        <label>WOX14</label>
    </interactant>
    <organismsDiffer>false</organismsDiffer>
    <experiments>3</experiments>
</comment>
<comment type="tissue specificity">
    <text evidence="3">Predominantly expressed in shoot tips containing the shoot apical meristem (SAM) and flower buds. Also expressed in mature flowers.</text>
</comment>
<comment type="similarity">
    <text evidence="5">Belongs to the SS18 family.</text>
</comment>
<comment type="sequence caution" evidence="5">
    <conflict type="erroneous gene model prediction">
        <sequence resource="EMBL-CDS" id="AAB62864"/>
    </conflict>
</comment>
<comment type="sequence caution" evidence="5">
    <conflict type="erroneous gene model prediction">
        <sequence resource="EMBL-CDS" id="CAB80894"/>
    </conflict>
</comment>
<keyword id="KW-0010">Activator</keyword>
<keyword id="KW-1185">Reference proteome</keyword>
<keyword id="KW-0804">Transcription</keyword>
<keyword id="KW-0805">Transcription regulation</keyword>
<protein>
    <recommendedName>
        <fullName>GRF1-interacting factor 3</fullName>
        <shortName>AtGIF3</shortName>
    </recommendedName>
    <alternativeName>
        <fullName>Transcription coactivator GIF3</fullName>
    </alternativeName>
</protein>